<proteinExistence type="evidence at transcript level"/>
<reference key="1">
    <citation type="journal article" date="2002" name="Nature">
        <title>The genome sequence and structure of rice chromosome 1.</title>
        <authorList>
            <person name="Sasaki T."/>
            <person name="Matsumoto T."/>
            <person name="Yamamoto K."/>
            <person name="Sakata K."/>
            <person name="Baba T."/>
            <person name="Katayose Y."/>
            <person name="Wu J."/>
            <person name="Niimura Y."/>
            <person name="Cheng Z."/>
            <person name="Nagamura Y."/>
            <person name="Antonio B.A."/>
            <person name="Kanamori H."/>
            <person name="Hosokawa S."/>
            <person name="Masukawa M."/>
            <person name="Arikawa K."/>
            <person name="Chiden Y."/>
            <person name="Hayashi M."/>
            <person name="Okamoto M."/>
            <person name="Ando T."/>
            <person name="Aoki H."/>
            <person name="Arita K."/>
            <person name="Hamada M."/>
            <person name="Harada C."/>
            <person name="Hijishita S."/>
            <person name="Honda M."/>
            <person name="Ichikawa Y."/>
            <person name="Idonuma A."/>
            <person name="Iijima M."/>
            <person name="Ikeda M."/>
            <person name="Ikeno M."/>
            <person name="Ito S."/>
            <person name="Ito T."/>
            <person name="Ito Y."/>
            <person name="Ito Y."/>
            <person name="Iwabuchi A."/>
            <person name="Kamiya K."/>
            <person name="Karasawa W."/>
            <person name="Katagiri S."/>
            <person name="Kikuta A."/>
            <person name="Kobayashi N."/>
            <person name="Kono I."/>
            <person name="Machita K."/>
            <person name="Maehara T."/>
            <person name="Mizuno H."/>
            <person name="Mizubayashi T."/>
            <person name="Mukai Y."/>
            <person name="Nagasaki H."/>
            <person name="Nakashima M."/>
            <person name="Nakama Y."/>
            <person name="Nakamichi Y."/>
            <person name="Nakamura M."/>
            <person name="Namiki N."/>
            <person name="Negishi M."/>
            <person name="Ohta I."/>
            <person name="Ono N."/>
            <person name="Saji S."/>
            <person name="Sakai K."/>
            <person name="Shibata M."/>
            <person name="Shimokawa T."/>
            <person name="Shomura A."/>
            <person name="Song J."/>
            <person name="Takazaki Y."/>
            <person name="Terasawa K."/>
            <person name="Tsuji K."/>
            <person name="Waki K."/>
            <person name="Yamagata H."/>
            <person name="Yamane H."/>
            <person name="Yoshiki S."/>
            <person name="Yoshihara R."/>
            <person name="Yukawa K."/>
            <person name="Zhong H."/>
            <person name="Iwama H."/>
            <person name="Endo T."/>
            <person name="Ito H."/>
            <person name="Hahn J.H."/>
            <person name="Kim H.-I."/>
            <person name="Eun M.-Y."/>
            <person name="Yano M."/>
            <person name="Jiang J."/>
            <person name="Gojobori T."/>
        </authorList>
    </citation>
    <scope>NUCLEOTIDE SEQUENCE [LARGE SCALE GENOMIC DNA]</scope>
    <source>
        <strain>cv. Nipponbare</strain>
    </source>
</reference>
<reference key="2">
    <citation type="journal article" date="2005" name="Nature">
        <title>The map-based sequence of the rice genome.</title>
        <authorList>
            <consortium name="International rice genome sequencing project (IRGSP)"/>
        </authorList>
    </citation>
    <scope>NUCLEOTIDE SEQUENCE [LARGE SCALE GENOMIC DNA]</scope>
    <source>
        <strain>cv. Nipponbare</strain>
    </source>
</reference>
<reference key="3">
    <citation type="journal article" date="2008" name="Nucleic Acids Res.">
        <title>The rice annotation project database (RAP-DB): 2008 update.</title>
        <authorList>
            <consortium name="The rice annotation project (RAP)"/>
        </authorList>
    </citation>
    <scope>GENOME REANNOTATION</scope>
    <source>
        <strain>cv. Nipponbare</strain>
    </source>
</reference>
<reference key="4">
    <citation type="journal article" date="2013" name="Rice">
        <title>Improvement of the Oryza sativa Nipponbare reference genome using next generation sequence and optical map data.</title>
        <authorList>
            <person name="Kawahara Y."/>
            <person name="de la Bastide M."/>
            <person name="Hamilton J.P."/>
            <person name="Kanamori H."/>
            <person name="McCombie W.R."/>
            <person name="Ouyang S."/>
            <person name="Schwartz D.C."/>
            <person name="Tanaka T."/>
            <person name="Wu J."/>
            <person name="Zhou S."/>
            <person name="Childs K.L."/>
            <person name="Davidson R.M."/>
            <person name="Lin H."/>
            <person name="Quesada-Ocampo L."/>
            <person name="Vaillancourt B."/>
            <person name="Sakai H."/>
            <person name="Lee S.S."/>
            <person name="Kim J."/>
            <person name="Numa H."/>
            <person name="Itoh T."/>
            <person name="Buell C.R."/>
            <person name="Matsumoto T."/>
        </authorList>
    </citation>
    <scope>GENOME REANNOTATION</scope>
    <source>
        <strain>cv. Nipponbare</strain>
    </source>
</reference>
<reference key="5">
    <citation type="journal article" date="2005" name="PLoS Biol.">
        <title>The genomes of Oryza sativa: a history of duplications.</title>
        <authorList>
            <person name="Yu J."/>
            <person name="Wang J."/>
            <person name="Lin W."/>
            <person name="Li S."/>
            <person name="Li H."/>
            <person name="Zhou J."/>
            <person name="Ni P."/>
            <person name="Dong W."/>
            <person name="Hu S."/>
            <person name="Zeng C."/>
            <person name="Zhang J."/>
            <person name="Zhang Y."/>
            <person name="Li R."/>
            <person name="Xu Z."/>
            <person name="Li S."/>
            <person name="Li X."/>
            <person name="Zheng H."/>
            <person name="Cong L."/>
            <person name="Lin L."/>
            <person name="Yin J."/>
            <person name="Geng J."/>
            <person name="Li G."/>
            <person name="Shi J."/>
            <person name="Liu J."/>
            <person name="Lv H."/>
            <person name="Li J."/>
            <person name="Wang J."/>
            <person name="Deng Y."/>
            <person name="Ran L."/>
            <person name="Shi X."/>
            <person name="Wang X."/>
            <person name="Wu Q."/>
            <person name="Li C."/>
            <person name="Ren X."/>
            <person name="Wang J."/>
            <person name="Wang X."/>
            <person name="Li D."/>
            <person name="Liu D."/>
            <person name="Zhang X."/>
            <person name="Ji Z."/>
            <person name="Zhao W."/>
            <person name="Sun Y."/>
            <person name="Zhang Z."/>
            <person name="Bao J."/>
            <person name="Han Y."/>
            <person name="Dong L."/>
            <person name="Ji J."/>
            <person name="Chen P."/>
            <person name="Wu S."/>
            <person name="Liu J."/>
            <person name="Xiao Y."/>
            <person name="Bu D."/>
            <person name="Tan J."/>
            <person name="Yang L."/>
            <person name="Ye C."/>
            <person name="Zhang J."/>
            <person name="Xu J."/>
            <person name="Zhou Y."/>
            <person name="Yu Y."/>
            <person name="Zhang B."/>
            <person name="Zhuang S."/>
            <person name="Wei H."/>
            <person name="Liu B."/>
            <person name="Lei M."/>
            <person name="Yu H."/>
            <person name="Li Y."/>
            <person name="Xu H."/>
            <person name="Wei S."/>
            <person name="He X."/>
            <person name="Fang L."/>
            <person name="Zhang Z."/>
            <person name="Zhang Y."/>
            <person name="Huang X."/>
            <person name="Su Z."/>
            <person name="Tong W."/>
            <person name="Li J."/>
            <person name="Tong Z."/>
            <person name="Li S."/>
            <person name="Ye J."/>
            <person name="Wang L."/>
            <person name="Fang L."/>
            <person name="Lei T."/>
            <person name="Chen C.-S."/>
            <person name="Chen H.-C."/>
            <person name="Xu Z."/>
            <person name="Li H."/>
            <person name="Huang H."/>
            <person name="Zhang F."/>
            <person name="Xu H."/>
            <person name="Li N."/>
            <person name="Zhao C."/>
            <person name="Li S."/>
            <person name="Dong L."/>
            <person name="Huang Y."/>
            <person name="Li L."/>
            <person name="Xi Y."/>
            <person name="Qi Q."/>
            <person name="Li W."/>
            <person name="Zhang B."/>
            <person name="Hu W."/>
            <person name="Zhang Y."/>
            <person name="Tian X."/>
            <person name="Jiao Y."/>
            <person name="Liang X."/>
            <person name="Jin J."/>
            <person name="Gao L."/>
            <person name="Zheng W."/>
            <person name="Hao B."/>
            <person name="Liu S.-M."/>
            <person name="Wang W."/>
            <person name="Yuan L."/>
            <person name="Cao M."/>
            <person name="McDermott J."/>
            <person name="Samudrala R."/>
            <person name="Wang J."/>
            <person name="Wong G.K.-S."/>
            <person name="Yang H."/>
        </authorList>
    </citation>
    <scope>NUCLEOTIDE SEQUENCE [LARGE SCALE GENOMIC DNA]</scope>
    <source>
        <strain>cv. Nipponbare</strain>
    </source>
</reference>
<reference key="6">
    <citation type="journal article" date="2003" name="Science">
        <title>Collection, mapping, and annotation of over 28,000 cDNA clones from japonica rice.</title>
        <authorList>
            <consortium name="The rice full-length cDNA consortium"/>
        </authorList>
    </citation>
    <scope>NUCLEOTIDE SEQUENCE [LARGE SCALE MRNA]</scope>
    <source>
        <strain>cv. Nipponbare</strain>
    </source>
</reference>
<reference key="7">
    <citation type="journal article" date="2005" name="Plant Physiol.">
        <title>Functional redundancy of AtFtsH metalloproteases in thylakoid membrane complexes.</title>
        <authorList>
            <person name="Yu F."/>
            <person name="Park S."/>
            <person name="Rodermel S.R."/>
        </authorList>
    </citation>
    <scope>GENE FAMILY</scope>
    <scope>NOMENCLATURE</scope>
</reference>
<protein>
    <recommendedName>
        <fullName>ATP-dependent zinc metalloprotease FTSH 3, mitochondrial</fullName>
        <shortName>OsFTSH3</shortName>
        <ecNumber>3.4.24.-</ecNumber>
    </recommendedName>
</protein>
<dbReference type="EC" id="3.4.24.-"/>
<dbReference type="EMBL" id="AP003240">
    <property type="protein sequence ID" value="BAB86453.1"/>
    <property type="molecule type" value="Genomic_DNA"/>
</dbReference>
<dbReference type="EMBL" id="AP008207">
    <property type="protein sequence ID" value="BAF06688.1"/>
    <property type="molecule type" value="Genomic_DNA"/>
</dbReference>
<dbReference type="EMBL" id="AP014957">
    <property type="protein sequence ID" value="BAS75170.1"/>
    <property type="molecule type" value="Genomic_DNA"/>
</dbReference>
<dbReference type="EMBL" id="CM000138">
    <property type="protein sequence ID" value="EAZ14117.1"/>
    <property type="molecule type" value="Genomic_DNA"/>
</dbReference>
<dbReference type="EMBL" id="AK100245">
    <property type="protein sequence ID" value="BAG94510.1"/>
    <property type="molecule type" value="mRNA"/>
</dbReference>
<dbReference type="RefSeq" id="XP_015626112.1">
    <property type="nucleotide sequence ID" value="XM_015770626.1"/>
</dbReference>
<dbReference type="SMR" id="Q8S2A7"/>
<dbReference type="FunCoup" id="Q8S2A7">
    <property type="interactions" value="2640"/>
</dbReference>
<dbReference type="STRING" id="39947.Q8S2A7"/>
<dbReference type="MEROPS" id="M41.022"/>
<dbReference type="PaxDb" id="39947-Q8S2A7"/>
<dbReference type="EnsemblPlants" id="Os01t0842600-01">
    <property type="protein sequence ID" value="Os01t0842600-01"/>
    <property type="gene ID" value="Os01g0842600"/>
</dbReference>
<dbReference type="Gramene" id="Os01t0842600-01">
    <property type="protein sequence ID" value="Os01t0842600-01"/>
    <property type="gene ID" value="Os01g0842600"/>
</dbReference>
<dbReference type="KEGG" id="dosa:Os01g0842600"/>
<dbReference type="eggNOG" id="KOG0731">
    <property type="taxonomic scope" value="Eukaryota"/>
</dbReference>
<dbReference type="HOGENOM" id="CLU_000688_23_2_1"/>
<dbReference type="InParanoid" id="Q8S2A7"/>
<dbReference type="OMA" id="EFMRFAP"/>
<dbReference type="OrthoDB" id="1413014at2759"/>
<dbReference type="Proteomes" id="UP000000763">
    <property type="component" value="Chromosome 1"/>
</dbReference>
<dbReference type="Proteomes" id="UP000007752">
    <property type="component" value="Chromosome 1"/>
</dbReference>
<dbReference type="Proteomes" id="UP000059680">
    <property type="component" value="Chromosome 1"/>
</dbReference>
<dbReference type="GO" id="GO:0005745">
    <property type="term" value="C:m-AAA complex"/>
    <property type="evidence" value="ECO:0000318"/>
    <property type="project" value="GO_Central"/>
</dbReference>
<dbReference type="GO" id="GO:0005524">
    <property type="term" value="F:ATP binding"/>
    <property type="evidence" value="ECO:0007669"/>
    <property type="project" value="UniProtKB-KW"/>
</dbReference>
<dbReference type="GO" id="GO:0016887">
    <property type="term" value="F:ATP hydrolysis activity"/>
    <property type="evidence" value="ECO:0007669"/>
    <property type="project" value="InterPro"/>
</dbReference>
<dbReference type="GO" id="GO:0004176">
    <property type="term" value="F:ATP-dependent peptidase activity"/>
    <property type="evidence" value="ECO:0007669"/>
    <property type="project" value="InterPro"/>
</dbReference>
<dbReference type="GO" id="GO:0004222">
    <property type="term" value="F:metalloendopeptidase activity"/>
    <property type="evidence" value="ECO:0000318"/>
    <property type="project" value="GO_Central"/>
</dbReference>
<dbReference type="GO" id="GO:0008270">
    <property type="term" value="F:zinc ion binding"/>
    <property type="evidence" value="ECO:0007669"/>
    <property type="project" value="InterPro"/>
</dbReference>
<dbReference type="GO" id="GO:0034982">
    <property type="term" value="P:mitochondrial protein processing"/>
    <property type="evidence" value="ECO:0000318"/>
    <property type="project" value="GO_Central"/>
</dbReference>
<dbReference type="CDD" id="cd19501">
    <property type="entry name" value="RecA-like_FtsH"/>
    <property type="match status" value="1"/>
</dbReference>
<dbReference type="FunFam" id="1.10.8.60:FF:000019">
    <property type="entry name" value="AFG3-like AAA ATPase 2"/>
    <property type="match status" value="1"/>
</dbReference>
<dbReference type="FunFam" id="3.40.50.300:FF:000001">
    <property type="entry name" value="ATP-dependent zinc metalloprotease FtsH"/>
    <property type="match status" value="1"/>
</dbReference>
<dbReference type="FunFam" id="3.40.1690.20:FF:000004">
    <property type="entry name" value="ATP-dependent zinc metalloprotease FTSH 10 mitochondrial"/>
    <property type="match status" value="1"/>
</dbReference>
<dbReference type="FunFam" id="1.20.58.760:FF:000005">
    <property type="entry name" value="ATP-dependent zinc metalloprotease FTSH 10, mitochondrial"/>
    <property type="match status" value="1"/>
</dbReference>
<dbReference type="Gene3D" id="1.10.8.60">
    <property type="match status" value="1"/>
</dbReference>
<dbReference type="Gene3D" id="3.40.1690.20">
    <property type="match status" value="1"/>
</dbReference>
<dbReference type="Gene3D" id="3.40.50.300">
    <property type="entry name" value="P-loop containing nucleotide triphosphate hydrolases"/>
    <property type="match status" value="1"/>
</dbReference>
<dbReference type="Gene3D" id="1.20.58.760">
    <property type="entry name" value="Peptidase M41"/>
    <property type="match status" value="1"/>
</dbReference>
<dbReference type="HAMAP" id="MF_01458">
    <property type="entry name" value="FtsH"/>
    <property type="match status" value="1"/>
</dbReference>
<dbReference type="InterPro" id="IPR003593">
    <property type="entry name" value="AAA+_ATPase"/>
</dbReference>
<dbReference type="InterPro" id="IPR041569">
    <property type="entry name" value="AAA_lid_3"/>
</dbReference>
<dbReference type="InterPro" id="IPR050928">
    <property type="entry name" value="ATP-dep_Zn_Metalloprotease"/>
</dbReference>
<dbReference type="InterPro" id="IPR003959">
    <property type="entry name" value="ATPase_AAA_core"/>
</dbReference>
<dbReference type="InterPro" id="IPR003960">
    <property type="entry name" value="ATPase_AAA_CS"/>
</dbReference>
<dbReference type="InterPro" id="IPR005936">
    <property type="entry name" value="FtsH"/>
</dbReference>
<dbReference type="InterPro" id="IPR027417">
    <property type="entry name" value="P-loop_NTPase"/>
</dbReference>
<dbReference type="InterPro" id="IPR011546">
    <property type="entry name" value="Pept_M41_FtsH_extracell"/>
</dbReference>
<dbReference type="InterPro" id="IPR000642">
    <property type="entry name" value="Peptidase_M41"/>
</dbReference>
<dbReference type="InterPro" id="IPR037219">
    <property type="entry name" value="Peptidase_M41-like"/>
</dbReference>
<dbReference type="NCBIfam" id="TIGR01241">
    <property type="entry name" value="FtsH_fam"/>
    <property type="match status" value="1"/>
</dbReference>
<dbReference type="PANTHER" id="PTHR43655">
    <property type="entry name" value="ATP-DEPENDENT PROTEASE"/>
    <property type="match status" value="1"/>
</dbReference>
<dbReference type="PANTHER" id="PTHR43655:SF25">
    <property type="entry name" value="ATP-DEPENDENT ZINC METALLOPROTEASE FTSH 3, MITOCHONDRIAL"/>
    <property type="match status" value="1"/>
</dbReference>
<dbReference type="Pfam" id="PF00004">
    <property type="entry name" value="AAA"/>
    <property type="match status" value="1"/>
</dbReference>
<dbReference type="Pfam" id="PF17862">
    <property type="entry name" value="AAA_lid_3"/>
    <property type="match status" value="1"/>
</dbReference>
<dbReference type="Pfam" id="PF06480">
    <property type="entry name" value="FtsH_ext"/>
    <property type="match status" value="1"/>
</dbReference>
<dbReference type="Pfam" id="PF01434">
    <property type="entry name" value="Peptidase_M41"/>
    <property type="match status" value="1"/>
</dbReference>
<dbReference type="SMART" id="SM00382">
    <property type="entry name" value="AAA"/>
    <property type="match status" value="1"/>
</dbReference>
<dbReference type="SUPFAM" id="SSF140990">
    <property type="entry name" value="FtsH protease domain-like"/>
    <property type="match status" value="1"/>
</dbReference>
<dbReference type="SUPFAM" id="SSF52540">
    <property type="entry name" value="P-loop containing nucleoside triphosphate hydrolases"/>
    <property type="match status" value="1"/>
</dbReference>
<dbReference type="PROSITE" id="PS00674">
    <property type="entry name" value="AAA"/>
    <property type="match status" value="1"/>
</dbReference>
<name>FTSH3_ORYSJ</name>
<evidence type="ECO:0000250" key="1"/>
<evidence type="ECO:0000255" key="2"/>
<evidence type="ECO:0000256" key="3">
    <source>
        <dbReference type="SAM" id="MobiDB-lite"/>
    </source>
</evidence>
<evidence type="ECO:0000305" key="4"/>
<comment type="function">
    <text evidence="1">Probable ATP-dependent zinc metallopeptidase.</text>
</comment>
<comment type="cofactor">
    <cofactor evidence="1">
        <name>Zn(2+)</name>
        <dbReference type="ChEBI" id="CHEBI:29105"/>
    </cofactor>
    <text evidence="1">Binds 1 zinc ion per subunit.</text>
</comment>
<comment type="subcellular location">
    <subcellularLocation>
        <location evidence="1">Mitochondrion inner membrane</location>
        <topology evidence="1">Single-pass membrane protein</topology>
    </subcellularLocation>
</comment>
<comment type="similarity">
    <text evidence="4">In the N-terminal section; belongs to the AAA ATPase family.</text>
</comment>
<comment type="similarity">
    <text evidence="4">In the C-terminal section; belongs to the peptidase M41 family.</text>
</comment>
<organism>
    <name type="scientific">Oryza sativa subsp. japonica</name>
    <name type="common">Rice</name>
    <dbReference type="NCBI Taxonomy" id="39947"/>
    <lineage>
        <taxon>Eukaryota</taxon>
        <taxon>Viridiplantae</taxon>
        <taxon>Streptophyta</taxon>
        <taxon>Embryophyta</taxon>
        <taxon>Tracheophyta</taxon>
        <taxon>Spermatophyta</taxon>
        <taxon>Magnoliopsida</taxon>
        <taxon>Liliopsida</taxon>
        <taxon>Poales</taxon>
        <taxon>Poaceae</taxon>
        <taxon>BOP clade</taxon>
        <taxon>Oryzoideae</taxon>
        <taxon>Oryzeae</taxon>
        <taxon>Oryzinae</taxon>
        <taxon>Oryza</taxon>
        <taxon>Oryza sativa</taxon>
    </lineage>
</organism>
<gene>
    <name type="primary">FTSH3</name>
    <name type="ordered locus">Os01g0842600</name>
    <name type="ordered locus">LOC_Os01g62500</name>
    <name type="ORF">OsJ_003942</name>
    <name type="ORF">P0406G08.15</name>
</gene>
<accession>Q8S2A7</accession>
<accession>B7EQ63</accession>
<feature type="transit peptide" description="Mitochondrion" evidence="2">
    <location>
        <begin position="1"/>
        <end position="21"/>
    </location>
</feature>
<feature type="chain" id="PRO_0000341339" description="ATP-dependent zinc metalloprotease FTSH 3, mitochondrial">
    <location>
        <begin position="22"/>
        <end position="802"/>
    </location>
</feature>
<feature type="transmembrane region" description="Helical" evidence="2">
    <location>
        <begin position="133"/>
        <end position="153"/>
    </location>
</feature>
<feature type="region of interest" description="Disordered" evidence="3">
    <location>
        <begin position="1"/>
        <end position="33"/>
    </location>
</feature>
<feature type="region of interest" description="Disordered" evidence="3">
    <location>
        <begin position="85"/>
        <end position="120"/>
    </location>
</feature>
<feature type="region of interest" description="Disordered" evidence="3">
    <location>
        <begin position="773"/>
        <end position="802"/>
    </location>
</feature>
<feature type="compositionally biased region" description="Low complexity" evidence="3">
    <location>
        <begin position="1"/>
        <end position="23"/>
    </location>
</feature>
<feature type="compositionally biased region" description="Basic and acidic residues" evidence="3">
    <location>
        <begin position="85"/>
        <end position="113"/>
    </location>
</feature>
<feature type="active site" evidence="1">
    <location>
        <position position="586"/>
    </location>
</feature>
<feature type="binding site" evidence="2">
    <location>
        <begin position="360"/>
        <end position="367"/>
    </location>
    <ligand>
        <name>ATP</name>
        <dbReference type="ChEBI" id="CHEBI:30616"/>
    </ligand>
</feature>
<feature type="binding site" evidence="1">
    <location>
        <position position="585"/>
    </location>
    <ligand>
        <name>Zn(2+)</name>
        <dbReference type="ChEBI" id="CHEBI:29105"/>
        <note>catalytic</note>
    </ligand>
</feature>
<feature type="binding site" evidence="1">
    <location>
        <position position="589"/>
    </location>
    <ligand>
        <name>Zn(2+)</name>
        <dbReference type="ChEBI" id="CHEBI:29105"/>
        <note>catalytic</note>
    </ligand>
</feature>
<feature type="binding site" evidence="1">
    <location>
        <position position="661"/>
    </location>
    <ligand>
        <name>Zn(2+)</name>
        <dbReference type="ChEBI" id="CHEBI:29105"/>
        <note>catalytic</note>
    </ligand>
</feature>
<sequence length="802" mass="88144">MSLSSLSRALARSARSSRQRQGSLLGGHGGLRASSPPLPCGELGFLRSYVTSVIGNRAAVASGAGKGGDWRFLLASRQFRRLFSDKSKKNHGKHSEEENKGKGDESDKSDSKKQSSSGDQWNFEESIKQFKDMIAPLFLFGLLLLSASASSSEQEISFQEFKNKLLEPGLVDHIVVSNKSIAKVYVRSSPSIDRIQDSDIHITTSHLPGIESPSSYKYYFNIGSVDSFEEKLQEAQKALEIDPHYYVPITYTTEAKWFEEVMKYVPTVLIIGLIYLLGKRIQNGFTVGGGPGKGGRSIFSIGKVQVTKLDKNSKNKVFFKDVAGCDEAKQEIMEFVHFLKNPKKYEELGAKIPKGALLVGPPGTGKTLLAKATAGESGVPFLSISGSDFMEMFVGVGPSRVRNLFQEARQCSPSIVFIDEIDAIGRARGRGGFSGGHDERESTLNQLLVEMDGFGTTSGVVVLAGTNRPDILDKALLRPGRFDRQISIDKPDIKGRDQIFRIYLKKLKLDKEPSFYSQRLAALTPGFAGADIANVCNEAALIAARSEGTLITMQHFESAIDRVIGGLEKKNKVISKLERRTVAYHESGHAVAGWFLEHAEPLLKVTIVPRGTAALGFAQYVPNDNLLMTKEQLFDMTCMTLGGRAAEEVLIGKISTGAQNDLEKVTKMTYAQVAVYGFSEKVGLLSFPQREDGFEMSKPYSSQTASIIDTEVREWVAKAYEKTVELIKQHKDQVAQIAELLLEKEVLHQDDLVQVLGERPFKTLEPTNYDRFKQGFQDEDSNRNAELSNADGASSLGEAVAS</sequence>
<keyword id="KW-0067">ATP-binding</keyword>
<keyword id="KW-0378">Hydrolase</keyword>
<keyword id="KW-0472">Membrane</keyword>
<keyword id="KW-0479">Metal-binding</keyword>
<keyword id="KW-0482">Metalloprotease</keyword>
<keyword id="KW-0496">Mitochondrion</keyword>
<keyword id="KW-0999">Mitochondrion inner membrane</keyword>
<keyword id="KW-0547">Nucleotide-binding</keyword>
<keyword id="KW-0645">Protease</keyword>
<keyword id="KW-1185">Reference proteome</keyword>
<keyword id="KW-0809">Transit peptide</keyword>
<keyword id="KW-0812">Transmembrane</keyword>
<keyword id="KW-1133">Transmembrane helix</keyword>
<keyword id="KW-0862">Zinc</keyword>